<proteinExistence type="inferred from homology"/>
<feature type="chain" id="PRO_0000279663" description="HTH-type transcriptional repressor PurR">
    <location>
        <begin position="1"/>
        <end position="334"/>
    </location>
</feature>
<feature type="domain" description="HTH lacI-type" evidence="1">
    <location>
        <begin position="2"/>
        <end position="56"/>
    </location>
</feature>
<feature type="DNA-binding region" description="H-T-H motif" evidence="1">
    <location>
        <begin position="4"/>
        <end position="23"/>
    </location>
</feature>
<feature type="DNA-binding region" evidence="1">
    <location>
        <begin position="48"/>
        <end position="56"/>
    </location>
</feature>
<feature type="binding site" evidence="1">
    <location>
        <position position="73"/>
    </location>
    <ligand>
        <name>hypoxanthine</name>
        <dbReference type="ChEBI" id="CHEBI:17368"/>
    </ligand>
</feature>
<feature type="binding site" evidence="1">
    <location>
        <position position="189"/>
    </location>
    <ligand>
        <name>hypoxanthine</name>
        <dbReference type="ChEBI" id="CHEBI:17368"/>
    </ligand>
</feature>
<feature type="binding site" evidence="1">
    <location>
        <position position="191"/>
    </location>
    <ligand>
        <name>hypoxanthine</name>
        <dbReference type="ChEBI" id="CHEBI:17368"/>
    </ligand>
</feature>
<feature type="binding site" evidence="1">
    <location>
        <position position="220"/>
    </location>
    <ligand>
        <name>hypoxanthine</name>
        <dbReference type="ChEBI" id="CHEBI:17368"/>
    </ligand>
</feature>
<feature type="binding site" evidence="1">
    <location>
        <position position="274"/>
    </location>
    <ligand>
        <name>hypoxanthine</name>
        <dbReference type="ChEBI" id="CHEBI:17368"/>
    </ligand>
</feature>
<dbReference type="EMBL" id="CR378669">
    <property type="protein sequence ID" value="CAG20507.1"/>
    <property type="status" value="ALT_INIT"/>
    <property type="molecule type" value="Genomic_DNA"/>
</dbReference>
<dbReference type="RefSeq" id="WP_041394342.1">
    <property type="nucleotide sequence ID" value="NC_006370.1"/>
</dbReference>
<dbReference type="SMR" id="Q6LQB9"/>
<dbReference type="STRING" id="298386.PBPRA2109"/>
<dbReference type="KEGG" id="ppr:PBPRA2109"/>
<dbReference type="eggNOG" id="COG1609">
    <property type="taxonomic scope" value="Bacteria"/>
</dbReference>
<dbReference type="HOGENOM" id="CLU_037628_6_2_6"/>
<dbReference type="UniPathway" id="UPA00488"/>
<dbReference type="Proteomes" id="UP000000593">
    <property type="component" value="Chromosome 1"/>
</dbReference>
<dbReference type="GO" id="GO:0003700">
    <property type="term" value="F:DNA-binding transcription factor activity"/>
    <property type="evidence" value="ECO:0007669"/>
    <property type="project" value="TreeGrafter"/>
</dbReference>
<dbReference type="GO" id="GO:0000976">
    <property type="term" value="F:transcription cis-regulatory region binding"/>
    <property type="evidence" value="ECO:0007669"/>
    <property type="project" value="TreeGrafter"/>
</dbReference>
<dbReference type="GO" id="GO:0045892">
    <property type="term" value="P:negative regulation of DNA-templated transcription"/>
    <property type="evidence" value="ECO:0007669"/>
    <property type="project" value="UniProtKB-UniRule"/>
</dbReference>
<dbReference type="GO" id="GO:0006164">
    <property type="term" value="P:purine nucleotide biosynthetic process"/>
    <property type="evidence" value="ECO:0007669"/>
    <property type="project" value="UniProtKB-UniPathway"/>
</dbReference>
<dbReference type="CDD" id="cd01392">
    <property type="entry name" value="HTH_LacI"/>
    <property type="match status" value="1"/>
</dbReference>
<dbReference type="CDD" id="cd06275">
    <property type="entry name" value="PBP1_PurR"/>
    <property type="match status" value="1"/>
</dbReference>
<dbReference type="FunFam" id="1.10.260.40:FF:000002">
    <property type="entry name" value="HTH-type transcriptional repressor PurR"/>
    <property type="match status" value="1"/>
</dbReference>
<dbReference type="Gene3D" id="3.40.50.2300">
    <property type="match status" value="2"/>
</dbReference>
<dbReference type="Gene3D" id="1.10.260.40">
    <property type="entry name" value="lambda repressor-like DNA-binding domains"/>
    <property type="match status" value="1"/>
</dbReference>
<dbReference type="HAMAP" id="MF_01277">
    <property type="entry name" value="HTH_type_PurR"/>
    <property type="match status" value="1"/>
</dbReference>
<dbReference type="InterPro" id="IPR000843">
    <property type="entry name" value="HTH_LacI"/>
</dbReference>
<dbReference type="InterPro" id="IPR046335">
    <property type="entry name" value="LacI/GalR-like_sensor"/>
</dbReference>
<dbReference type="InterPro" id="IPR010982">
    <property type="entry name" value="Lambda_DNA-bd_dom_sf"/>
</dbReference>
<dbReference type="InterPro" id="IPR028082">
    <property type="entry name" value="Peripla_BP_I"/>
</dbReference>
<dbReference type="InterPro" id="IPR023588">
    <property type="entry name" value="Tscrpt_reg_HTH_PurR"/>
</dbReference>
<dbReference type="NCBIfam" id="NF007979">
    <property type="entry name" value="PRK10703.1"/>
    <property type="match status" value="1"/>
</dbReference>
<dbReference type="PANTHER" id="PTHR30146:SF148">
    <property type="entry name" value="HTH-TYPE TRANSCRIPTIONAL REPRESSOR PURR-RELATED"/>
    <property type="match status" value="1"/>
</dbReference>
<dbReference type="PANTHER" id="PTHR30146">
    <property type="entry name" value="LACI-RELATED TRANSCRIPTIONAL REPRESSOR"/>
    <property type="match status" value="1"/>
</dbReference>
<dbReference type="Pfam" id="PF00356">
    <property type="entry name" value="LacI"/>
    <property type="match status" value="1"/>
</dbReference>
<dbReference type="Pfam" id="PF13377">
    <property type="entry name" value="Peripla_BP_3"/>
    <property type="match status" value="1"/>
</dbReference>
<dbReference type="PRINTS" id="PR00036">
    <property type="entry name" value="HTHLACI"/>
</dbReference>
<dbReference type="SMART" id="SM00354">
    <property type="entry name" value="HTH_LACI"/>
    <property type="match status" value="1"/>
</dbReference>
<dbReference type="SUPFAM" id="SSF47413">
    <property type="entry name" value="lambda repressor-like DNA-binding domains"/>
    <property type="match status" value="1"/>
</dbReference>
<dbReference type="SUPFAM" id="SSF53822">
    <property type="entry name" value="Periplasmic binding protein-like I"/>
    <property type="match status" value="1"/>
</dbReference>
<dbReference type="PROSITE" id="PS00356">
    <property type="entry name" value="HTH_LACI_1"/>
    <property type="match status" value="1"/>
</dbReference>
<dbReference type="PROSITE" id="PS50932">
    <property type="entry name" value="HTH_LACI_2"/>
    <property type="match status" value="1"/>
</dbReference>
<accession>Q6LQB9</accession>
<comment type="function">
    <text evidence="1">Is the main repressor of the genes involved in the de novo synthesis of purine nucleotides, regulating purB, purC, purEK, purF, purHD, purL, purMN and guaBA expression. PurR is allosterically activated to bind its cognate DNA by binding the purine corepressors, hypoxanthine or guanine, thereby effecting transcription repression.</text>
</comment>
<comment type="pathway">
    <text>Purine metabolism; purine nucleotide biosynthesis [regulation].</text>
</comment>
<comment type="subunit">
    <text evidence="1">Homodimer.</text>
</comment>
<comment type="domain">
    <text evidence="1">Consists of two structural and functional domains: an N-terminal DNA-binding domain, approximately the first 60 residues, and a larger C-terminal domain, approximately 280 residues, which imparts the function of corepressor binding and oligomerization.</text>
</comment>
<comment type="sequence caution" evidence="2">
    <conflict type="erroneous initiation">
        <sequence resource="EMBL-CDS" id="CAG20507"/>
    </conflict>
</comment>
<evidence type="ECO:0000255" key="1">
    <source>
        <dbReference type="HAMAP-Rule" id="MF_01277"/>
    </source>
</evidence>
<evidence type="ECO:0000305" key="2"/>
<organism>
    <name type="scientific">Photobacterium profundum (strain SS9)</name>
    <dbReference type="NCBI Taxonomy" id="298386"/>
    <lineage>
        <taxon>Bacteria</taxon>
        <taxon>Pseudomonadati</taxon>
        <taxon>Pseudomonadota</taxon>
        <taxon>Gammaproteobacteria</taxon>
        <taxon>Vibrionales</taxon>
        <taxon>Vibrionaceae</taxon>
        <taxon>Photobacterium</taxon>
    </lineage>
</organism>
<keyword id="KW-0238">DNA-binding</keyword>
<keyword id="KW-0658">Purine biosynthesis</keyword>
<keyword id="KW-1185">Reference proteome</keyword>
<keyword id="KW-0678">Repressor</keyword>
<keyword id="KW-0804">Transcription</keyword>
<keyword id="KW-0805">Transcription regulation</keyword>
<reference key="1">
    <citation type="journal article" date="2005" name="Science">
        <title>Life at depth: Photobacterium profundum genome sequence and expression analysis.</title>
        <authorList>
            <person name="Vezzi A."/>
            <person name="Campanaro S."/>
            <person name="D'Angelo M."/>
            <person name="Simonato F."/>
            <person name="Vitulo N."/>
            <person name="Lauro F.M."/>
            <person name="Cestaro A."/>
            <person name="Malacrida G."/>
            <person name="Simionati B."/>
            <person name="Cannata N."/>
            <person name="Romualdi C."/>
            <person name="Bartlett D.H."/>
            <person name="Valle G."/>
        </authorList>
    </citation>
    <scope>NUCLEOTIDE SEQUENCE [LARGE SCALE GENOMIC DNA]</scope>
    <source>
        <strain>ATCC BAA-1253 / SS9</strain>
    </source>
</reference>
<gene>
    <name evidence="1" type="primary">purR</name>
    <name type="ordered locus">PBPRA2109</name>
</gene>
<sequence length="334" mass="37246">MATIKDVARMAGVSTTTVSHVINKTRFVAEATQKKVLAAVDDLNYAPSAVARSLKCNTTKTIGMLVTKSTNPFFAEVIHGVEEYCYNAGYTLILCNTEGNLVKQRDYLRMLAEKRVDGLLVMCSDIDQDLLDLLARKSDLPMVIMDWGPESPLTDKIQDNAEQGGYVATKHFIDNGHEKIGCLSGHSEKSTCRERLKGFNKAMAEAGITVNNNWIIDGDFECESAVEAANQYIAMKDRPTAIFCFNDIMAMALISTFEQAGVRVPDDISVIGYDNIDLAPYFSPPLTTIHQPKRRLGKTAIEILMERVKDKNHERRVFEMNPELVIRKSVKDLN</sequence>
<name>PURR_PHOPR</name>
<protein>
    <recommendedName>
        <fullName evidence="1">HTH-type transcriptional repressor PurR</fullName>
    </recommendedName>
    <alternativeName>
        <fullName evidence="1">Pur regulon repressor</fullName>
    </alternativeName>
    <alternativeName>
        <fullName evidence="1">Purine nucleotide synthesis repressor</fullName>
    </alternativeName>
</protein>